<evidence type="ECO:0000255" key="1"/>
<evidence type="ECO:0000255" key="2">
    <source>
        <dbReference type="PROSITE-ProRule" id="PRU00437"/>
    </source>
</evidence>
<evidence type="ECO:0000269" key="3">
    <source>
    </source>
</evidence>
<evidence type="ECO:0000303" key="4">
    <source>
    </source>
</evidence>
<evidence type="ECO:0000305" key="5"/>
<name>YABE_BACSU</name>
<sequence>MKKLFSVKLSKSKVILVAACLLLAGSGTAYAAHELTKQSVSVSINGKKKHIRTHANTVGDLLETLDIKTRDEDKITPAKQTKITADMDVVYEAAKPVKLTINGEEKTLWSTAKTVGALLDEQDVDVKEQDQIDPAIDTDISKDMKINIEPAFQVTVNDAGKQKKIWTTSTTVADFLKQQKMNIKDEDKIKPALDAKLTKGKADITITRIEKVTDVVEEKIAFDVKKQEDASLEKGKEKVVQKGKEGKLKKHFEVVKENGKEVSRELVKEETAEQSKDKVIAVGTKQSSPKFETVSASGDSKTVVSRSNESTGKVMTVSSTAYTASCSGCSGHTATGVNLKNNPNAKVIAVDPNVIPLGSKVHVEGYGYAIAADTGSAIKGNKIDVFFPEKSSAYRWGNKTVKIKILN</sequence>
<keyword id="KW-1185">Reference proteome</keyword>
<keyword id="KW-0732">Signal</keyword>
<accession>P37546</accession>
<proteinExistence type="evidence at transcript level"/>
<protein>
    <recommendedName>
        <fullName evidence="5">Putative cell wall shaping protein YabE</fullName>
    </recommendedName>
</protein>
<dbReference type="EMBL" id="D26185">
    <property type="protein sequence ID" value="BAA05275.1"/>
    <property type="status" value="ALT_INIT"/>
    <property type="molecule type" value="Genomic_DNA"/>
</dbReference>
<dbReference type="EMBL" id="AL009126">
    <property type="protein sequence ID" value="CAB11816.1"/>
    <property type="status" value="ALT_INIT"/>
    <property type="molecule type" value="Genomic_DNA"/>
</dbReference>
<dbReference type="PIR" id="S66069">
    <property type="entry name" value="S66069"/>
</dbReference>
<dbReference type="RefSeq" id="NP_387921.1">
    <property type="nucleotide sequence ID" value="NC_000964.3"/>
</dbReference>
<dbReference type="RefSeq" id="WP_003226754.1">
    <property type="nucleotide sequence ID" value="NZ_OZ025638.1"/>
</dbReference>
<dbReference type="SMR" id="P37546"/>
<dbReference type="FunCoup" id="P37546">
    <property type="interactions" value="23"/>
</dbReference>
<dbReference type="STRING" id="224308.BSU00400"/>
<dbReference type="jPOST" id="P37546"/>
<dbReference type="PaxDb" id="224308-BSU00400"/>
<dbReference type="EnsemblBacteria" id="CAB11816">
    <property type="protein sequence ID" value="CAB11816"/>
    <property type="gene ID" value="BSU_00400"/>
</dbReference>
<dbReference type="GeneID" id="936891"/>
<dbReference type="KEGG" id="bsu:BSU00400"/>
<dbReference type="PATRIC" id="fig|224308.179.peg.40"/>
<dbReference type="eggNOG" id="COG3583">
    <property type="taxonomic scope" value="Bacteria"/>
</dbReference>
<dbReference type="eggNOG" id="COG3584">
    <property type="taxonomic scope" value="Bacteria"/>
</dbReference>
<dbReference type="InParanoid" id="P37546"/>
<dbReference type="OrthoDB" id="9798935at2"/>
<dbReference type="PhylomeDB" id="P37546"/>
<dbReference type="BioCyc" id="BSUB:BSU00400-MONOMER"/>
<dbReference type="Proteomes" id="UP000001570">
    <property type="component" value="Chromosome"/>
</dbReference>
<dbReference type="GO" id="GO:0019867">
    <property type="term" value="C:outer membrane"/>
    <property type="evidence" value="ECO:0007669"/>
    <property type="project" value="InterPro"/>
</dbReference>
<dbReference type="GO" id="GO:0004553">
    <property type="term" value="F:hydrolase activity, hydrolyzing O-glycosyl compounds"/>
    <property type="evidence" value="ECO:0007669"/>
    <property type="project" value="InterPro"/>
</dbReference>
<dbReference type="GO" id="GO:0009254">
    <property type="term" value="P:peptidoglycan turnover"/>
    <property type="evidence" value="ECO:0007669"/>
    <property type="project" value="InterPro"/>
</dbReference>
<dbReference type="CDD" id="cd22786">
    <property type="entry name" value="DPBB_YuiC-like"/>
    <property type="match status" value="1"/>
</dbReference>
<dbReference type="Gene3D" id="2.20.230.10">
    <property type="entry name" value="Resuscitation-promoting factor rpfb"/>
    <property type="match status" value="1"/>
</dbReference>
<dbReference type="Gene3D" id="2.40.40.10">
    <property type="entry name" value="RlpA-like domain"/>
    <property type="match status" value="1"/>
</dbReference>
<dbReference type="InterPro" id="IPR010611">
    <property type="entry name" value="3D_dom"/>
</dbReference>
<dbReference type="InterPro" id="IPR007137">
    <property type="entry name" value="DUF348"/>
</dbReference>
<dbReference type="InterPro" id="IPR011098">
    <property type="entry name" value="G5_dom"/>
</dbReference>
<dbReference type="InterPro" id="IPR051933">
    <property type="entry name" value="Resuscitation_pf_RpfB"/>
</dbReference>
<dbReference type="InterPro" id="IPR036908">
    <property type="entry name" value="RlpA-like_sf"/>
</dbReference>
<dbReference type="PANTHER" id="PTHR39160">
    <property type="entry name" value="CELL WALL-BINDING PROTEIN YOCH"/>
    <property type="match status" value="1"/>
</dbReference>
<dbReference type="PANTHER" id="PTHR39160:SF4">
    <property type="entry name" value="RESUSCITATION-PROMOTING FACTOR RPFB"/>
    <property type="match status" value="1"/>
</dbReference>
<dbReference type="Pfam" id="PF06725">
    <property type="entry name" value="3D"/>
    <property type="match status" value="1"/>
</dbReference>
<dbReference type="Pfam" id="PF03990">
    <property type="entry name" value="DUF348"/>
    <property type="match status" value="3"/>
</dbReference>
<dbReference type="Pfam" id="PF07501">
    <property type="entry name" value="G5"/>
    <property type="match status" value="1"/>
</dbReference>
<dbReference type="SMART" id="SM01208">
    <property type="entry name" value="G5"/>
    <property type="match status" value="1"/>
</dbReference>
<dbReference type="SUPFAM" id="SSF50685">
    <property type="entry name" value="Barwin-like endoglucanases"/>
    <property type="match status" value="1"/>
</dbReference>
<dbReference type="PROSITE" id="PS51109">
    <property type="entry name" value="G5"/>
    <property type="match status" value="1"/>
</dbReference>
<gene>
    <name type="primary">yabE</name>
    <name type="ordered locus">BSU00400</name>
</gene>
<reference key="1">
    <citation type="journal article" date="1994" name="DNA Res.">
        <title>Systematic sequencing of the 180 kilobase region of the Bacillus subtilis chromosome containing the replication origin.</title>
        <authorList>
            <person name="Ogasawara N."/>
            <person name="Nakai S."/>
            <person name="Yoshikawa H."/>
        </authorList>
    </citation>
    <scope>NUCLEOTIDE SEQUENCE [GENOMIC DNA]</scope>
    <source>
        <strain>168</strain>
    </source>
</reference>
<reference key="2">
    <citation type="journal article" date="1997" name="Nature">
        <title>The complete genome sequence of the Gram-positive bacterium Bacillus subtilis.</title>
        <authorList>
            <person name="Kunst F."/>
            <person name="Ogasawara N."/>
            <person name="Moszer I."/>
            <person name="Albertini A.M."/>
            <person name="Alloni G."/>
            <person name="Azevedo V."/>
            <person name="Bertero M.G."/>
            <person name="Bessieres P."/>
            <person name="Bolotin A."/>
            <person name="Borchert S."/>
            <person name="Borriss R."/>
            <person name="Boursier L."/>
            <person name="Brans A."/>
            <person name="Braun M."/>
            <person name="Brignell S.C."/>
            <person name="Bron S."/>
            <person name="Brouillet S."/>
            <person name="Bruschi C.V."/>
            <person name="Caldwell B."/>
            <person name="Capuano V."/>
            <person name="Carter N.M."/>
            <person name="Choi S.-K."/>
            <person name="Codani J.-J."/>
            <person name="Connerton I.F."/>
            <person name="Cummings N.J."/>
            <person name="Daniel R.A."/>
            <person name="Denizot F."/>
            <person name="Devine K.M."/>
            <person name="Duesterhoeft A."/>
            <person name="Ehrlich S.D."/>
            <person name="Emmerson P.T."/>
            <person name="Entian K.-D."/>
            <person name="Errington J."/>
            <person name="Fabret C."/>
            <person name="Ferrari E."/>
            <person name="Foulger D."/>
            <person name="Fritz C."/>
            <person name="Fujita M."/>
            <person name="Fujita Y."/>
            <person name="Fuma S."/>
            <person name="Galizzi A."/>
            <person name="Galleron N."/>
            <person name="Ghim S.-Y."/>
            <person name="Glaser P."/>
            <person name="Goffeau A."/>
            <person name="Golightly E.J."/>
            <person name="Grandi G."/>
            <person name="Guiseppi G."/>
            <person name="Guy B.J."/>
            <person name="Haga K."/>
            <person name="Haiech J."/>
            <person name="Harwood C.R."/>
            <person name="Henaut A."/>
            <person name="Hilbert H."/>
            <person name="Holsappel S."/>
            <person name="Hosono S."/>
            <person name="Hullo M.-F."/>
            <person name="Itaya M."/>
            <person name="Jones L.-M."/>
            <person name="Joris B."/>
            <person name="Karamata D."/>
            <person name="Kasahara Y."/>
            <person name="Klaerr-Blanchard M."/>
            <person name="Klein C."/>
            <person name="Kobayashi Y."/>
            <person name="Koetter P."/>
            <person name="Koningstein G."/>
            <person name="Krogh S."/>
            <person name="Kumano M."/>
            <person name="Kurita K."/>
            <person name="Lapidus A."/>
            <person name="Lardinois S."/>
            <person name="Lauber J."/>
            <person name="Lazarevic V."/>
            <person name="Lee S.-M."/>
            <person name="Levine A."/>
            <person name="Liu H."/>
            <person name="Masuda S."/>
            <person name="Mauel C."/>
            <person name="Medigue C."/>
            <person name="Medina N."/>
            <person name="Mellado R.P."/>
            <person name="Mizuno M."/>
            <person name="Moestl D."/>
            <person name="Nakai S."/>
            <person name="Noback M."/>
            <person name="Noone D."/>
            <person name="O'Reilly M."/>
            <person name="Ogawa K."/>
            <person name="Ogiwara A."/>
            <person name="Oudega B."/>
            <person name="Park S.-H."/>
            <person name="Parro V."/>
            <person name="Pohl T.M."/>
            <person name="Portetelle D."/>
            <person name="Porwollik S."/>
            <person name="Prescott A.M."/>
            <person name="Presecan E."/>
            <person name="Pujic P."/>
            <person name="Purnelle B."/>
            <person name="Rapoport G."/>
            <person name="Rey M."/>
            <person name="Reynolds S."/>
            <person name="Rieger M."/>
            <person name="Rivolta C."/>
            <person name="Rocha E."/>
            <person name="Roche B."/>
            <person name="Rose M."/>
            <person name="Sadaie Y."/>
            <person name="Sato T."/>
            <person name="Scanlan E."/>
            <person name="Schleich S."/>
            <person name="Schroeter R."/>
            <person name="Scoffone F."/>
            <person name="Sekiguchi J."/>
            <person name="Sekowska A."/>
            <person name="Seror S.J."/>
            <person name="Serror P."/>
            <person name="Shin B.-S."/>
            <person name="Soldo B."/>
            <person name="Sorokin A."/>
            <person name="Tacconi E."/>
            <person name="Takagi T."/>
            <person name="Takahashi H."/>
            <person name="Takemaru K."/>
            <person name="Takeuchi M."/>
            <person name="Tamakoshi A."/>
            <person name="Tanaka T."/>
            <person name="Terpstra P."/>
            <person name="Tognoni A."/>
            <person name="Tosato V."/>
            <person name="Uchiyama S."/>
            <person name="Vandenbol M."/>
            <person name="Vannier F."/>
            <person name="Vassarotti A."/>
            <person name="Viari A."/>
            <person name="Wambutt R."/>
            <person name="Wedler E."/>
            <person name="Wedler H."/>
            <person name="Weitzenegger T."/>
            <person name="Winters P."/>
            <person name="Wipat A."/>
            <person name="Yamamoto H."/>
            <person name="Yamane K."/>
            <person name="Yasumoto K."/>
            <person name="Yata K."/>
            <person name="Yoshida K."/>
            <person name="Yoshikawa H.-F."/>
            <person name="Zumstein E."/>
            <person name="Yoshikawa H."/>
            <person name="Danchin A."/>
        </authorList>
    </citation>
    <scope>NUCLEOTIDE SEQUENCE [LARGE SCALE GENOMIC DNA]</scope>
    <source>
        <strain>168</strain>
    </source>
</reference>
<reference key="3">
    <citation type="journal article" date="2005" name="BMC Genomics">
        <title>A novel firmicute protein family related to the actinobacterial resuscitation-promoting factors by non-orthologous domain displacement.</title>
        <authorList>
            <person name="Ravagnani A."/>
            <person name="Finan C.L."/>
            <person name="Young M."/>
        </authorList>
    </citation>
    <scope>DISCUSSION OF POSSIBLE FUNCTION</scope>
</reference>
<reference key="4">
    <citation type="journal article" date="2009" name="J. Bacteriol.">
        <title>Extracytoplasmic function sigma factors regulate expression of the Bacillus subtilis yabE gene via a cis-acting antisense RNA.</title>
        <authorList>
            <person name="Eiamphungporn W."/>
            <person name="Helmann J.D."/>
        </authorList>
    </citation>
    <scope>CORRECTION TO START CODON</scope>
    <scope>INDUCTION</scope>
    <scope>DISRUPTION PHENOTYPE</scope>
</reference>
<comment type="function">
    <text evidence="4">Suggested to be involved in cell wall modification.</text>
</comment>
<comment type="induction">
    <text evidence="3">Negatively regulated by an overlapping cis-acting antisense RNA which itself is positively regulated by extracytoplasmic sigma factors SigM and SigX; when both sigma factors are deleted expression of the yabE mRNA is detected.</text>
</comment>
<comment type="disruption phenotype">
    <text evidence="3">No visible phenotype during recovery from stationary phase or sporulation efficiency.</text>
</comment>
<comment type="sequence caution" evidence="5">
    <conflict type="erroneous initiation">
        <sequence resource="EMBL-CDS" id="BAA05275"/>
    </conflict>
    <text>Truncated N-terminus.</text>
</comment>
<comment type="sequence caution" evidence="5">
    <conflict type="erroneous initiation">
        <sequence resource="EMBL-CDS" id="CAB11816"/>
    </conflict>
    <text>Truncated N-terminus.</text>
</comment>
<feature type="signal peptide" evidence="1">
    <location>
        <begin position="1"/>
        <end position="31"/>
    </location>
</feature>
<feature type="chain" id="PRO_0000049439" description="Putative cell wall shaping protein YabE" evidence="1">
    <location>
        <begin position="32"/>
        <end position="407"/>
    </location>
</feature>
<feature type="domain" description="G5" evidence="2">
    <location>
        <begin position="206"/>
        <end position="286"/>
    </location>
</feature>
<organism>
    <name type="scientific">Bacillus subtilis (strain 168)</name>
    <dbReference type="NCBI Taxonomy" id="224308"/>
    <lineage>
        <taxon>Bacteria</taxon>
        <taxon>Bacillati</taxon>
        <taxon>Bacillota</taxon>
        <taxon>Bacilli</taxon>
        <taxon>Bacillales</taxon>
        <taxon>Bacillaceae</taxon>
        <taxon>Bacillus</taxon>
    </lineage>
</organism>